<dbReference type="EC" id="2.7.4.3" evidence="1"/>
<dbReference type="EMBL" id="CP000768">
    <property type="protein sequence ID" value="ABS44846.1"/>
    <property type="molecule type" value="Genomic_DNA"/>
</dbReference>
<dbReference type="SMR" id="A7H4H3"/>
<dbReference type="KEGG" id="cjd:JJD26997_1360"/>
<dbReference type="HOGENOM" id="CLU_032354_4_1_7"/>
<dbReference type="UniPathway" id="UPA00588">
    <property type="reaction ID" value="UER00649"/>
</dbReference>
<dbReference type="Proteomes" id="UP000002302">
    <property type="component" value="Chromosome"/>
</dbReference>
<dbReference type="GO" id="GO:0005737">
    <property type="term" value="C:cytoplasm"/>
    <property type="evidence" value="ECO:0007669"/>
    <property type="project" value="UniProtKB-SubCell"/>
</dbReference>
<dbReference type="GO" id="GO:0004017">
    <property type="term" value="F:adenylate kinase activity"/>
    <property type="evidence" value="ECO:0007669"/>
    <property type="project" value="UniProtKB-UniRule"/>
</dbReference>
<dbReference type="GO" id="GO:0005524">
    <property type="term" value="F:ATP binding"/>
    <property type="evidence" value="ECO:0007669"/>
    <property type="project" value="UniProtKB-UniRule"/>
</dbReference>
<dbReference type="GO" id="GO:0044209">
    <property type="term" value="P:AMP salvage"/>
    <property type="evidence" value="ECO:0007669"/>
    <property type="project" value="UniProtKB-UniRule"/>
</dbReference>
<dbReference type="CDD" id="cd01428">
    <property type="entry name" value="ADK"/>
    <property type="match status" value="1"/>
</dbReference>
<dbReference type="Gene3D" id="3.40.50.300">
    <property type="entry name" value="P-loop containing nucleotide triphosphate hydrolases"/>
    <property type="match status" value="1"/>
</dbReference>
<dbReference type="HAMAP" id="MF_00235">
    <property type="entry name" value="Adenylate_kinase_Adk"/>
    <property type="match status" value="1"/>
</dbReference>
<dbReference type="InterPro" id="IPR000850">
    <property type="entry name" value="Adenylat/UMP-CMP_kin"/>
</dbReference>
<dbReference type="InterPro" id="IPR033690">
    <property type="entry name" value="Adenylat_kinase_CS"/>
</dbReference>
<dbReference type="InterPro" id="IPR027417">
    <property type="entry name" value="P-loop_NTPase"/>
</dbReference>
<dbReference type="NCBIfam" id="NF001384">
    <property type="entry name" value="PRK00279.2-2"/>
    <property type="match status" value="1"/>
</dbReference>
<dbReference type="PANTHER" id="PTHR23359">
    <property type="entry name" value="NUCLEOTIDE KINASE"/>
    <property type="match status" value="1"/>
</dbReference>
<dbReference type="Pfam" id="PF00406">
    <property type="entry name" value="ADK"/>
    <property type="match status" value="1"/>
</dbReference>
<dbReference type="PRINTS" id="PR00094">
    <property type="entry name" value="ADENYLTKNASE"/>
</dbReference>
<dbReference type="SUPFAM" id="SSF52540">
    <property type="entry name" value="P-loop containing nucleoside triphosphate hydrolases"/>
    <property type="match status" value="1"/>
</dbReference>
<dbReference type="PROSITE" id="PS00113">
    <property type="entry name" value="ADENYLATE_KINASE"/>
    <property type="match status" value="1"/>
</dbReference>
<gene>
    <name evidence="1" type="primary">adk</name>
    <name type="ordered locus">JJD26997_1360</name>
</gene>
<reference key="1">
    <citation type="submission" date="2007-07" db="EMBL/GenBank/DDBJ databases">
        <title>Complete genome sequence of Campylobacter jejuni subsp doylei 269.97 isolated from human blood.</title>
        <authorList>
            <person name="Fouts D.E."/>
            <person name="Mongodin E.F."/>
            <person name="Puiu D."/>
            <person name="Sebastian Y."/>
            <person name="Miller W.G."/>
            <person name="Mandrell R.E."/>
            <person name="Lastovica A.J."/>
            <person name="Nelson K.E."/>
        </authorList>
    </citation>
    <scope>NUCLEOTIDE SEQUENCE [LARGE SCALE GENOMIC DNA]</scope>
    <source>
        <strain>ATCC BAA-1458 / RM4099 / 269.97</strain>
    </source>
</reference>
<proteinExistence type="inferred from homology"/>
<organism>
    <name type="scientific">Campylobacter jejuni subsp. doylei (strain ATCC BAA-1458 / RM4099 / 269.97)</name>
    <dbReference type="NCBI Taxonomy" id="360109"/>
    <lineage>
        <taxon>Bacteria</taxon>
        <taxon>Pseudomonadati</taxon>
        <taxon>Campylobacterota</taxon>
        <taxon>Epsilonproteobacteria</taxon>
        <taxon>Campylobacterales</taxon>
        <taxon>Campylobacteraceae</taxon>
        <taxon>Campylobacter</taxon>
    </lineage>
</organism>
<comment type="function">
    <text evidence="1">Catalyzes the reversible transfer of the terminal phosphate group between ATP and AMP. Plays an important role in cellular energy homeostasis and in adenine nucleotide metabolism.</text>
</comment>
<comment type="catalytic activity">
    <reaction evidence="1">
        <text>AMP + ATP = 2 ADP</text>
        <dbReference type="Rhea" id="RHEA:12973"/>
        <dbReference type="ChEBI" id="CHEBI:30616"/>
        <dbReference type="ChEBI" id="CHEBI:456215"/>
        <dbReference type="ChEBI" id="CHEBI:456216"/>
        <dbReference type="EC" id="2.7.4.3"/>
    </reaction>
</comment>
<comment type="pathway">
    <text evidence="1">Purine metabolism; AMP biosynthesis via salvage pathway; AMP from ADP: step 1/1.</text>
</comment>
<comment type="subunit">
    <text evidence="1">Monomer.</text>
</comment>
<comment type="subcellular location">
    <subcellularLocation>
        <location evidence="1">Cytoplasm</location>
    </subcellularLocation>
</comment>
<comment type="domain">
    <text evidence="1">Consists of three domains, a large central CORE domain and two small peripheral domains, NMPbind and LID, which undergo movements during catalysis. The LID domain closes over the site of phosphoryl transfer upon ATP binding. Assembling and dissambling the active center during each catalytic cycle provides an effective means to prevent ATP hydrolysis.</text>
</comment>
<comment type="similarity">
    <text evidence="1">Belongs to the adenylate kinase family.</text>
</comment>
<accession>A7H4H3</accession>
<name>KAD_CAMJD</name>
<feature type="chain" id="PRO_1000058811" description="Adenylate kinase">
    <location>
        <begin position="1"/>
        <end position="192"/>
    </location>
</feature>
<feature type="region of interest" description="NMP" evidence="1">
    <location>
        <begin position="34"/>
        <end position="63"/>
    </location>
</feature>
<feature type="region of interest" description="LID" evidence="1">
    <location>
        <begin position="130"/>
        <end position="136"/>
    </location>
</feature>
<feature type="binding site" evidence="1">
    <location>
        <begin position="12"/>
        <end position="17"/>
    </location>
    <ligand>
        <name>ATP</name>
        <dbReference type="ChEBI" id="CHEBI:30616"/>
    </ligand>
</feature>
<feature type="binding site" evidence="1">
    <location>
        <position position="35"/>
    </location>
    <ligand>
        <name>AMP</name>
        <dbReference type="ChEBI" id="CHEBI:456215"/>
    </ligand>
</feature>
<feature type="binding site" evidence="1">
    <location>
        <position position="40"/>
    </location>
    <ligand>
        <name>AMP</name>
        <dbReference type="ChEBI" id="CHEBI:456215"/>
    </ligand>
</feature>
<feature type="binding site" evidence="1">
    <location>
        <begin position="61"/>
        <end position="63"/>
    </location>
    <ligand>
        <name>AMP</name>
        <dbReference type="ChEBI" id="CHEBI:456215"/>
    </ligand>
</feature>
<feature type="binding site" evidence="1">
    <location>
        <begin position="88"/>
        <end position="91"/>
    </location>
    <ligand>
        <name>AMP</name>
        <dbReference type="ChEBI" id="CHEBI:456215"/>
    </ligand>
</feature>
<feature type="binding site" evidence="1">
    <location>
        <position position="95"/>
    </location>
    <ligand>
        <name>AMP</name>
        <dbReference type="ChEBI" id="CHEBI:456215"/>
    </ligand>
</feature>
<feature type="binding site" evidence="1">
    <location>
        <position position="131"/>
    </location>
    <ligand>
        <name>ATP</name>
        <dbReference type="ChEBI" id="CHEBI:30616"/>
    </ligand>
</feature>
<feature type="binding site" evidence="1">
    <location>
        <position position="133"/>
    </location>
    <ligand>
        <name>AMP</name>
        <dbReference type="ChEBI" id="CHEBI:456215"/>
    </ligand>
</feature>
<feature type="binding site" evidence="1">
    <location>
        <position position="145"/>
    </location>
    <ligand>
        <name>AMP</name>
        <dbReference type="ChEBI" id="CHEBI:456215"/>
    </ligand>
</feature>
<feature type="binding site" evidence="1">
    <location>
        <position position="173"/>
    </location>
    <ligand>
        <name>ATP</name>
        <dbReference type="ChEBI" id="CHEBI:30616"/>
    </ligand>
</feature>
<evidence type="ECO:0000255" key="1">
    <source>
        <dbReference type="HAMAP-Rule" id="MF_00235"/>
    </source>
</evidence>
<sequence>MKELFLIIGAPGSGKTTDASLIAQADATNITHYSTGDLLRAQVASGSELGKTIDSFISKGNLVPLDVVVNTIVCALKAAPTKTIIIDGYPRSVEQMMEFDKVLSEQNEICLKGVIEVRVSEEVAKKRVLGRNRGADDNEEVFYNRMKVYTEPLNEILDFYQKKKLHFIIDGERTIEPIVADMKELIKKIQSI</sequence>
<protein>
    <recommendedName>
        <fullName evidence="1">Adenylate kinase</fullName>
        <shortName evidence="1">AK</shortName>
        <ecNumber evidence="1">2.7.4.3</ecNumber>
    </recommendedName>
    <alternativeName>
        <fullName evidence="1">ATP-AMP transphosphorylase</fullName>
    </alternativeName>
    <alternativeName>
        <fullName evidence="1">ATP:AMP phosphotransferase</fullName>
    </alternativeName>
    <alternativeName>
        <fullName evidence="1">Adenylate monophosphate kinase</fullName>
    </alternativeName>
</protein>
<keyword id="KW-0067">ATP-binding</keyword>
<keyword id="KW-0963">Cytoplasm</keyword>
<keyword id="KW-0418">Kinase</keyword>
<keyword id="KW-0545">Nucleotide biosynthesis</keyword>
<keyword id="KW-0547">Nucleotide-binding</keyword>
<keyword id="KW-0808">Transferase</keyword>